<reference key="1">
    <citation type="journal article" date="2008" name="Genome Res.">
        <title>Comparative genome analysis of Salmonella enteritidis PT4 and Salmonella gallinarum 287/91 provides insights into evolutionary and host adaptation pathways.</title>
        <authorList>
            <person name="Thomson N.R."/>
            <person name="Clayton D.J."/>
            <person name="Windhorst D."/>
            <person name="Vernikos G."/>
            <person name="Davidson S."/>
            <person name="Churcher C."/>
            <person name="Quail M.A."/>
            <person name="Stevens M."/>
            <person name="Jones M.A."/>
            <person name="Watson M."/>
            <person name="Barron A."/>
            <person name="Layton A."/>
            <person name="Pickard D."/>
            <person name="Kingsley R.A."/>
            <person name="Bignell A."/>
            <person name="Clark L."/>
            <person name="Harris B."/>
            <person name="Ormond D."/>
            <person name="Abdellah Z."/>
            <person name="Brooks K."/>
            <person name="Cherevach I."/>
            <person name="Chillingworth T."/>
            <person name="Woodward J."/>
            <person name="Norberczak H."/>
            <person name="Lord A."/>
            <person name="Arrowsmith C."/>
            <person name="Jagels K."/>
            <person name="Moule S."/>
            <person name="Mungall K."/>
            <person name="Saunders M."/>
            <person name="Whitehead S."/>
            <person name="Chabalgoity J.A."/>
            <person name="Maskell D."/>
            <person name="Humphreys T."/>
            <person name="Roberts M."/>
            <person name="Barrow P.A."/>
            <person name="Dougan G."/>
            <person name="Parkhill J."/>
        </authorList>
    </citation>
    <scope>NUCLEOTIDE SEQUENCE [LARGE SCALE GENOMIC DNA]</scope>
    <source>
        <strain>P125109</strain>
    </source>
</reference>
<protein>
    <recommendedName>
        <fullName evidence="1">Small ribosomal subunit protein uS19</fullName>
    </recommendedName>
    <alternativeName>
        <fullName evidence="2">30S ribosomal protein S19</fullName>
    </alternativeName>
</protein>
<organism>
    <name type="scientific">Salmonella enteritidis PT4 (strain P125109)</name>
    <dbReference type="NCBI Taxonomy" id="550537"/>
    <lineage>
        <taxon>Bacteria</taxon>
        <taxon>Pseudomonadati</taxon>
        <taxon>Pseudomonadota</taxon>
        <taxon>Gammaproteobacteria</taxon>
        <taxon>Enterobacterales</taxon>
        <taxon>Enterobacteriaceae</taxon>
        <taxon>Salmonella</taxon>
    </lineage>
</organism>
<feature type="chain" id="PRO_1000128030" description="Small ribosomal subunit protein uS19">
    <location>
        <begin position="1"/>
        <end position="92"/>
    </location>
</feature>
<accession>B5R287</accession>
<sequence length="92" mass="10416">MPRSLKKGPFIDLHLLKKVEKAVESGDKKPLRTWSRRSTIFPNMIGLTIAVHNGRQHVPVFVSDEMVGHKLGEFAPTRTYRGHAADKKAKKK</sequence>
<evidence type="ECO:0000255" key="1">
    <source>
        <dbReference type="HAMAP-Rule" id="MF_00531"/>
    </source>
</evidence>
<evidence type="ECO:0000305" key="2"/>
<comment type="function">
    <text evidence="1">Protein S19 forms a complex with S13 that binds strongly to the 16S ribosomal RNA.</text>
</comment>
<comment type="similarity">
    <text evidence="1">Belongs to the universal ribosomal protein uS19 family.</text>
</comment>
<keyword id="KW-0687">Ribonucleoprotein</keyword>
<keyword id="KW-0689">Ribosomal protein</keyword>
<keyword id="KW-0694">RNA-binding</keyword>
<keyword id="KW-0699">rRNA-binding</keyword>
<proteinExistence type="inferred from homology"/>
<dbReference type="EMBL" id="AM933172">
    <property type="protein sequence ID" value="CAR34839.1"/>
    <property type="molecule type" value="Genomic_DNA"/>
</dbReference>
<dbReference type="RefSeq" id="WP_001138115.1">
    <property type="nucleotide sequence ID" value="NC_011294.1"/>
</dbReference>
<dbReference type="SMR" id="B5R287"/>
<dbReference type="GeneID" id="97603665"/>
<dbReference type="KEGG" id="set:SEN3264"/>
<dbReference type="HOGENOM" id="CLU_144911_0_1_6"/>
<dbReference type="Proteomes" id="UP000000613">
    <property type="component" value="Chromosome"/>
</dbReference>
<dbReference type="GO" id="GO:0005737">
    <property type="term" value="C:cytoplasm"/>
    <property type="evidence" value="ECO:0007669"/>
    <property type="project" value="UniProtKB-ARBA"/>
</dbReference>
<dbReference type="GO" id="GO:0015935">
    <property type="term" value="C:small ribosomal subunit"/>
    <property type="evidence" value="ECO:0007669"/>
    <property type="project" value="InterPro"/>
</dbReference>
<dbReference type="GO" id="GO:0019843">
    <property type="term" value="F:rRNA binding"/>
    <property type="evidence" value="ECO:0007669"/>
    <property type="project" value="UniProtKB-UniRule"/>
</dbReference>
<dbReference type="GO" id="GO:0003735">
    <property type="term" value="F:structural constituent of ribosome"/>
    <property type="evidence" value="ECO:0007669"/>
    <property type="project" value="InterPro"/>
</dbReference>
<dbReference type="GO" id="GO:0000028">
    <property type="term" value="P:ribosomal small subunit assembly"/>
    <property type="evidence" value="ECO:0007669"/>
    <property type="project" value="TreeGrafter"/>
</dbReference>
<dbReference type="GO" id="GO:0006412">
    <property type="term" value="P:translation"/>
    <property type="evidence" value="ECO:0007669"/>
    <property type="project" value="UniProtKB-UniRule"/>
</dbReference>
<dbReference type="FunFam" id="3.30.860.10:FF:000001">
    <property type="entry name" value="30S ribosomal protein S19"/>
    <property type="match status" value="1"/>
</dbReference>
<dbReference type="Gene3D" id="3.30.860.10">
    <property type="entry name" value="30s Ribosomal Protein S19, Chain A"/>
    <property type="match status" value="1"/>
</dbReference>
<dbReference type="HAMAP" id="MF_00531">
    <property type="entry name" value="Ribosomal_uS19"/>
    <property type="match status" value="1"/>
</dbReference>
<dbReference type="InterPro" id="IPR002222">
    <property type="entry name" value="Ribosomal_uS19"/>
</dbReference>
<dbReference type="InterPro" id="IPR005732">
    <property type="entry name" value="Ribosomal_uS19_bac-type"/>
</dbReference>
<dbReference type="InterPro" id="IPR020934">
    <property type="entry name" value="Ribosomal_uS19_CS"/>
</dbReference>
<dbReference type="InterPro" id="IPR023575">
    <property type="entry name" value="Ribosomal_uS19_SF"/>
</dbReference>
<dbReference type="NCBIfam" id="TIGR01050">
    <property type="entry name" value="rpsS_bact"/>
    <property type="match status" value="1"/>
</dbReference>
<dbReference type="PANTHER" id="PTHR11880">
    <property type="entry name" value="RIBOSOMAL PROTEIN S19P FAMILY MEMBER"/>
    <property type="match status" value="1"/>
</dbReference>
<dbReference type="PANTHER" id="PTHR11880:SF8">
    <property type="entry name" value="SMALL RIBOSOMAL SUBUNIT PROTEIN US19M"/>
    <property type="match status" value="1"/>
</dbReference>
<dbReference type="Pfam" id="PF00203">
    <property type="entry name" value="Ribosomal_S19"/>
    <property type="match status" value="1"/>
</dbReference>
<dbReference type="PIRSF" id="PIRSF002144">
    <property type="entry name" value="Ribosomal_S19"/>
    <property type="match status" value="1"/>
</dbReference>
<dbReference type="PRINTS" id="PR00975">
    <property type="entry name" value="RIBOSOMALS19"/>
</dbReference>
<dbReference type="SUPFAM" id="SSF54570">
    <property type="entry name" value="Ribosomal protein S19"/>
    <property type="match status" value="1"/>
</dbReference>
<dbReference type="PROSITE" id="PS00323">
    <property type="entry name" value="RIBOSOMAL_S19"/>
    <property type="match status" value="1"/>
</dbReference>
<gene>
    <name evidence="1" type="primary">rpsS</name>
    <name type="ordered locus">SEN3264</name>
</gene>
<name>RS19_SALEP</name>